<reference key="1">
    <citation type="journal article" date="2008" name="PLoS Genet.">
        <title>Complete genome sequence of the N2-fixing broad host range endophyte Klebsiella pneumoniae 342 and virulence predictions verified in mice.</title>
        <authorList>
            <person name="Fouts D.E."/>
            <person name="Tyler H.L."/>
            <person name="DeBoy R.T."/>
            <person name="Daugherty S."/>
            <person name="Ren Q."/>
            <person name="Badger J.H."/>
            <person name="Durkin A.S."/>
            <person name="Huot H."/>
            <person name="Shrivastava S."/>
            <person name="Kothari S."/>
            <person name="Dodson R.J."/>
            <person name="Mohamoud Y."/>
            <person name="Khouri H."/>
            <person name="Roesch L.F.W."/>
            <person name="Krogfelt K.A."/>
            <person name="Struve C."/>
            <person name="Triplett E.W."/>
            <person name="Methe B.A."/>
        </authorList>
    </citation>
    <scope>NUCLEOTIDE SEQUENCE [LARGE SCALE GENOMIC DNA]</scope>
    <source>
        <strain>342</strain>
    </source>
</reference>
<comment type="function">
    <text evidence="1">Specifically methylates the guanosine in position 1516 of 16S rRNA.</text>
</comment>
<comment type="catalytic activity">
    <reaction evidence="1">
        <text>guanosine(1516) in 16S rRNA + S-adenosyl-L-methionine = N(2)-methylguanosine(1516) in 16S rRNA + S-adenosyl-L-homocysteine + H(+)</text>
        <dbReference type="Rhea" id="RHEA:43220"/>
        <dbReference type="Rhea" id="RHEA-COMP:10412"/>
        <dbReference type="Rhea" id="RHEA-COMP:10413"/>
        <dbReference type="ChEBI" id="CHEBI:15378"/>
        <dbReference type="ChEBI" id="CHEBI:57856"/>
        <dbReference type="ChEBI" id="CHEBI:59789"/>
        <dbReference type="ChEBI" id="CHEBI:74269"/>
        <dbReference type="ChEBI" id="CHEBI:74481"/>
        <dbReference type="EC" id="2.1.1.242"/>
    </reaction>
</comment>
<comment type="subcellular location">
    <subcellularLocation>
        <location evidence="1">Cytoplasm</location>
    </subcellularLocation>
</comment>
<comment type="similarity">
    <text evidence="1">Belongs to the methyltransferase superfamily. RsmJ family.</text>
</comment>
<name>RSMJ_KLEP3</name>
<organism>
    <name type="scientific">Klebsiella pneumoniae (strain 342)</name>
    <dbReference type="NCBI Taxonomy" id="507522"/>
    <lineage>
        <taxon>Bacteria</taxon>
        <taxon>Pseudomonadati</taxon>
        <taxon>Pseudomonadota</taxon>
        <taxon>Gammaproteobacteria</taxon>
        <taxon>Enterobacterales</taxon>
        <taxon>Enterobacteriaceae</taxon>
        <taxon>Klebsiella/Raoultella group</taxon>
        <taxon>Klebsiella</taxon>
        <taxon>Klebsiella pneumoniae complex</taxon>
    </lineage>
</organism>
<gene>
    <name evidence="1" type="primary">rsmJ</name>
    <name type="ordered locus">KPK_0245</name>
</gene>
<evidence type="ECO:0000255" key="1">
    <source>
        <dbReference type="HAMAP-Rule" id="MF_01523"/>
    </source>
</evidence>
<keyword id="KW-0963">Cytoplasm</keyword>
<keyword id="KW-0489">Methyltransferase</keyword>
<keyword id="KW-0698">rRNA processing</keyword>
<keyword id="KW-0949">S-adenosyl-L-methionine</keyword>
<keyword id="KW-0808">Transferase</keyword>
<proteinExistence type="inferred from homology"/>
<feature type="chain" id="PRO_1000198501" description="Ribosomal RNA small subunit methyltransferase J">
    <location>
        <begin position="1"/>
        <end position="250"/>
    </location>
</feature>
<feature type="binding site" evidence="1">
    <location>
        <begin position="101"/>
        <end position="102"/>
    </location>
    <ligand>
        <name>S-adenosyl-L-methionine</name>
        <dbReference type="ChEBI" id="CHEBI:59789"/>
    </ligand>
</feature>
<feature type="binding site" evidence="1">
    <location>
        <begin position="117"/>
        <end position="118"/>
    </location>
    <ligand>
        <name>S-adenosyl-L-methionine</name>
        <dbReference type="ChEBI" id="CHEBI:59789"/>
    </ligand>
</feature>
<feature type="binding site" evidence="1">
    <location>
        <begin position="153"/>
        <end position="154"/>
    </location>
    <ligand>
        <name>S-adenosyl-L-methionine</name>
        <dbReference type="ChEBI" id="CHEBI:59789"/>
    </ligand>
</feature>
<feature type="binding site" evidence="1">
    <location>
        <position position="171"/>
    </location>
    <ligand>
        <name>S-adenosyl-L-methionine</name>
        <dbReference type="ChEBI" id="CHEBI:59789"/>
    </ligand>
</feature>
<dbReference type="EC" id="2.1.1.242" evidence="1"/>
<dbReference type="EMBL" id="CP000964">
    <property type="protein sequence ID" value="ACI09687.1"/>
    <property type="molecule type" value="Genomic_DNA"/>
</dbReference>
<dbReference type="SMR" id="B5XN47"/>
<dbReference type="KEGG" id="kpe:KPK_0245"/>
<dbReference type="HOGENOM" id="CLU_076324_0_0_6"/>
<dbReference type="Proteomes" id="UP000001734">
    <property type="component" value="Chromosome"/>
</dbReference>
<dbReference type="GO" id="GO:0005737">
    <property type="term" value="C:cytoplasm"/>
    <property type="evidence" value="ECO:0007669"/>
    <property type="project" value="UniProtKB-SubCell"/>
</dbReference>
<dbReference type="GO" id="GO:0008990">
    <property type="term" value="F:rRNA (guanine-N2-)-methyltransferase activity"/>
    <property type="evidence" value="ECO:0007669"/>
    <property type="project" value="UniProtKB-UniRule"/>
</dbReference>
<dbReference type="CDD" id="cd02440">
    <property type="entry name" value="AdoMet_MTases"/>
    <property type="match status" value="1"/>
</dbReference>
<dbReference type="FunFam" id="3.40.50.150:FF:000072">
    <property type="entry name" value="Ribosomal RNA small subunit methyltransferase J"/>
    <property type="match status" value="1"/>
</dbReference>
<dbReference type="Gene3D" id="3.40.50.150">
    <property type="entry name" value="Vaccinia Virus protein VP39"/>
    <property type="match status" value="1"/>
</dbReference>
<dbReference type="Gene3D" id="3.40.1630.10">
    <property type="entry name" value="YhiQ-like domain"/>
    <property type="match status" value="1"/>
</dbReference>
<dbReference type="HAMAP" id="MF_01523">
    <property type="entry name" value="16SrRNA_methyltr_J"/>
    <property type="match status" value="1"/>
</dbReference>
<dbReference type="InterPro" id="IPR007536">
    <property type="entry name" value="16SrRNA_methylTrfase_J"/>
</dbReference>
<dbReference type="InterPro" id="IPR029063">
    <property type="entry name" value="SAM-dependent_MTases_sf"/>
</dbReference>
<dbReference type="NCBIfam" id="NF008012">
    <property type="entry name" value="PRK10742.1"/>
    <property type="match status" value="1"/>
</dbReference>
<dbReference type="PANTHER" id="PTHR36112">
    <property type="entry name" value="RIBOSOMAL RNA SMALL SUBUNIT METHYLTRANSFERASE J"/>
    <property type="match status" value="1"/>
</dbReference>
<dbReference type="PANTHER" id="PTHR36112:SF1">
    <property type="entry name" value="RIBOSOMAL RNA SMALL SUBUNIT METHYLTRANSFERASE J"/>
    <property type="match status" value="1"/>
</dbReference>
<dbReference type="Pfam" id="PF04445">
    <property type="entry name" value="SAM_MT"/>
    <property type="match status" value="1"/>
</dbReference>
<dbReference type="SUPFAM" id="SSF53335">
    <property type="entry name" value="S-adenosyl-L-methionine-dependent methyltransferases"/>
    <property type="match status" value="1"/>
</dbReference>
<protein>
    <recommendedName>
        <fullName evidence="1">Ribosomal RNA small subunit methyltransferase J</fullName>
        <ecNumber evidence="1">2.1.1.242</ecNumber>
    </recommendedName>
    <alternativeName>
        <fullName evidence="1">16S rRNA m2G1516 methyltransferase</fullName>
    </alternativeName>
    <alternativeName>
        <fullName evidence="1">rRNA (guanine-N(2)-)-methyltransferase</fullName>
    </alternativeName>
</protein>
<sequence>MKICLIDETGAGDGALSVLAARWGLEQDEDNLMALVLTTEHLELRKRDEPKLGGIFVDFVGGAMAHRRKFGGGRGEAVAKAVGIKGDYLPDVVDATAGLGRDAFVLASVGCRVRMLERNPVVAALLDDGLARGYADAEIGGWLQERLQLIHASSLTALTDITPRPQVVYLDPMFPHKQKSALVKKEMRVFQSLVGPDLDADGLLAPARQLATKRVVVKRPDYAPPLAEVATPNAVVTKGHRFDIYAGTPE</sequence>
<accession>B5XN47</accession>